<sequence>MPRKGPAPKRPVVADPVYGSPVVSQLVNKILLDGKKGLAERIVYDALEGVSSKSGNDAVATLKKALDNIRPTLEVRSRRVGGSTYQVPVEVKPHRANTLALRWLTSYAKGRREKTMTERLANEILDASNGLGAAVKRREDTHKMAESNKAFAHYRW</sequence>
<evidence type="ECO:0000255" key="1">
    <source>
        <dbReference type="HAMAP-Rule" id="MF_00480"/>
    </source>
</evidence>
<evidence type="ECO:0000305" key="2"/>
<keyword id="KW-1185">Reference proteome</keyword>
<keyword id="KW-0687">Ribonucleoprotein</keyword>
<keyword id="KW-0689">Ribosomal protein</keyword>
<keyword id="KW-0694">RNA-binding</keyword>
<keyword id="KW-0699">rRNA-binding</keyword>
<keyword id="KW-0820">tRNA-binding</keyword>
<dbReference type="EMBL" id="AE016822">
    <property type="protein sequence ID" value="AAT89756.1"/>
    <property type="molecule type" value="Genomic_DNA"/>
</dbReference>
<dbReference type="RefSeq" id="WP_011186742.1">
    <property type="nucleotide sequence ID" value="NC_006087.1"/>
</dbReference>
<dbReference type="SMR" id="Q6ACY8"/>
<dbReference type="STRING" id="281090.Lxx20410"/>
<dbReference type="KEGG" id="lxx:Lxx20410"/>
<dbReference type="eggNOG" id="COG0049">
    <property type="taxonomic scope" value="Bacteria"/>
</dbReference>
<dbReference type="HOGENOM" id="CLU_072226_1_1_11"/>
<dbReference type="Proteomes" id="UP000001306">
    <property type="component" value="Chromosome"/>
</dbReference>
<dbReference type="GO" id="GO:0015935">
    <property type="term" value="C:small ribosomal subunit"/>
    <property type="evidence" value="ECO:0007669"/>
    <property type="project" value="InterPro"/>
</dbReference>
<dbReference type="GO" id="GO:0019843">
    <property type="term" value="F:rRNA binding"/>
    <property type="evidence" value="ECO:0007669"/>
    <property type="project" value="UniProtKB-UniRule"/>
</dbReference>
<dbReference type="GO" id="GO:0003735">
    <property type="term" value="F:structural constituent of ribosome"/>
    <property type="evidence" value="ECO:0007669"/>
    <property type="project" value="InterPro"/>
</dbReference>
<dbReference type="GO" id="GO:0000049">
    <property type="term" value="F:tRNA binding"/>
    <property type="evidence" value="ECO:0007669"/>
    <property type="project" value="UniProtKB-UniRule"/>
</dbReference>
<dbReference type="GO" id="GO:0006412">
    <property type="term" value="P:translation"/>
    <property type="evidence" value="ECO:0007669"/>
    <property type="project" value="UniProtKB-UniRule"/>
</dbReference>
<dbReference type="CDD" id="cd14869">
    <property type="entry name" value="uS7_Bacteria"/>
    <property type="match status" value="1"/>
</dbReference>
<dbReference type="FunFam" id="1.10.455.10:FF:000001">
    <property type="entry name" value="30S ribosomal protein S7"/>
    <property type="match status" value="1"/>
</dbReference>
<dbReference type="Gene3D" id="1.10.455.10">
    <property type="entry name" value="Ribosomal protein S7 domain"/>
    <property type="match status" value="1"/>
</dbReference>
<dbReference type="HAMAP" id="MF_00480_B">
    <property type="entry name" value="Ribosomal_uS7_B"/>
    <property type="match status" value="1"/>
</dbReference>
<dbReference type="InterPro" id="IPR000235">
    <property type="entry name" value="Ribosomal_uS7"/>
</dbReference>
<dbReference type="InterPro" id="IPR005717">
    <property type="entry name" value="Ribosomal_uS7_bac/org-type"/>
</dbReference>
<dbReference type="InterPro" id="IPR020606">
    <property type="entry name" value="Ribosomal_uS7_CS"/>
</dbReference>
<dbReference type="InterPro" id="IPR023798">
    <property type="entry name" value="Ribosomal_uS7_dom"/>
</dbReference>
<dbReference type="InterPro" id="IPR036823">
    <property type="entry name" value="Ribosomal_uS7_dom_sf"/>
</dbReference>
<dbReference type="NCBIfam" id="TIGR01029">
    <property type="entry name" value="rpsG_bact"/>
    <property type="match status" value="1"/>
</dbReference>
<dbReference type="PANTHER" id="PTHR11205">
    <property type="entry name" value="RIBOSOMAL PROTEIN S7"/>
    <property type="match status" value="1"/>
</dbReference>
<dbReference type="Pfam" id="PF00177">
    <property type="entry name" value="Ribosomal_S7"/>
    <property type="match status" value="1"/>
</dbReference>
<dbReference type="PIRSF" id="PIRSF002122">
    <property type="entry name" value="RPS7p_RPS7a_RPS5e_RPS7o"/>
    <property type="match status" value="1"/>
</dbReference>
<dbReference type="SUPFAM" id="SSF47973">
    <property type="entry name" value="Ribosomal protein S7"/>
    <property type="match status" value="1"/>
</dbReference>
<dbReference type="PROSITE" id="PS00052">
    <property type="entry name" value="RIBOSOMAL_S7"/>
    <property type="match status" value="1"/>
</dbReference>
<protein>
    <recommendedName>
        <fullName evidence="1">Small ribosomal subunit protein uS7</fullName>
    </recommendedName>
    <alternativeName>
        <fullName evidence="2">30S ribosomal protein S7</fullName>
    </alternativeName>
</protein>
<organism>
    <name type="scientific">Leifsonia xyli subsp. xyli (strain CTCB07)</name>
    <dbReference type="NCBI Taxonomy" id="281090"/>
    <lineage>
        <taxon>Bacteria</taxon>
        <taxon>Bacillati</taxon>
        <taxon>Actinomycetota</taxon>
        <taxon>Actinomycetes</taxon>
        <taxon>Micrococcales</taxon>
        <taxon>Microbacteriaceae</taxon>
        <taxon>Leifsonia</taxon>
    </lineage>
</organism>
<name>RS7_LEIXX</name>
<feature type="chain" id="PRO_0000124282" description="Small ribosomal subunit protein uS7">
    <location>
        <begin position="1"/>
        <end position="156"/>
    </location>
</feature>
<accession>Q6ACY8</accession>
<gene>
    <name evidence="1" type="primary">rpsG</name>
    <name type="ordered locus">Lxx20410</name>
</gene>
<comment type="function">
    <text evidence="1">One of the primary rRNA binding proteins, it binds directly to 16S rRNA where it nucleates assembly of the head domain of the 30S subunit. Is located at the subunit interface close to the decoding center, probably blocks exit of the E-site tRNA.</text>
</comment>
<comment type="subunit">
    <text evidence="1">Part of the 30S ribosomal subunit. Contacts proteins S9 and S11.</text>
</comment>
<comment type="similarity">
    <text evidence="1">Belongs to the universal ribosomal protein uS7 family.</text>
</comment>
<reference key="1">
    <citation type="journal article" date="2004" name="Mol. Plant Microbe Interact.">
        <title>The genome sequence of the Gram-positive sugarcane pathogen Leifsonia xyli subsp. xyli.</title>
        <authorList>
            <person name="Monteiro-Vitorello C.B."/>
            <person name="Camargo L.E.A."/>
            <person name="Van Sluys M.A."/>
            <person name="Kitajima J.P."/>
            <person name="Truffi D."/>
            <person name="do Amaral A.M."/>
            <person name="Harakava R."/>
            <person name="de Oliveira J.C.F."/>
            <person name="Wood D."/>
            <person name="de Oliveira M.C."/>
            <person name="Miyaki C.Y."/>
            <person name="Takita M.A."/>
            <person name="da Silva A.C.R."/>
            <person name="Furlan L.R."/>
            <person name="Carraro D.M."/>
            <person name="Camarotte G."/>
            <person name="Almeida N.F. Jr."/>
            <person name="Carrer H."/>
            <person name="Coutinho L.L."/>
            <person name="El-Dorry H.A."/>
            <person name="Ferro M.I.T."/>
            <person name="Gagliardi P.R."/>
            <person name="Giglioti E."/>
            <person name="Goldman M.H.S."/>
            <person name="Goldman G.H."/>
            <person name="Kimura E.T."/>
            <person name="Ferro E.S."/>
            <person name="Kuramae E.E."/>
            <person name="Lemos E.G.M."/>
            <person name="Lemos M.V.F."/>
            <person name="Mauro S.M.Z."/>
            <person name="Machado M.A."/>
            <person name="Marino C.L."/>
            <person name="Menck C.F."/>
            <person name="Nunes L.R."/>
            <person name="Oliveira R.C."/>
            <person name="Pereira G.G."/>
            <person name="Siqueira W."/>
            <person name="de Souza A.A."/>
            <person name="Tsai S.M."/>
            <person name="Zanca A.S."/>
            <person name="Simpson A.J.G."/>
            <person name="Brumbley S.M."/>
            <person name="Setubal J.C."/>
        </authorList>
    </citation>
    <scope>NUCLEOTIDE SEQUENCE [LARGE SCALE GENOMIC DNA]</scope>
    <source>
        <strain>CTCB07</strain>
    </source>
</reference>
<proteinExistence type="inferred from homology"/>